<name>RL2_SACI1</name>
<evidence type="ECO:0000255" key="1">
    <source>
        <dbReference type="HAMAP-Rule" id="MF_01320"/>
    </source>
</evidence>
<evidence type="ECO:0000256" key="2">
    <source>
        <dbReference type="SAM" id="MobiDB-lite"/>
    </source>
</evidence>
<evidence type="ECO:0000305" key="3"/>
<sequence>MGKNLLQQRAGKGSPTFRSPSWLRIGKVRYPNIFGHLVGKVIDIVHNPGMNTPVAIIKLENGTKFLTQAIQGLVINQKIEFGKGSPIANGNVIEIGDAPEGTIVCNVEENFGDGGKYARSAGSYAVVVGKSGDKVLIKLPSDKIKAVSNKARATVGVVAGGGVVEKPLLKAGANYWKYKVKAKKWPIVRGVAMNVVDHPHGGGLHQSVSRPSTVSRNAPPGRKVGHIAARRTGRKEGK</sequence>
<accession>C3NHA6</accession>
<feature type="chain" id="PRO_1000214464" description="Large ribosomal subunit protein uL2">
    <location>
        <begin position="1"/>
        <end position="238"/>
    </location>
</feature>
<feature type="region of interest" description="Disordered" evidence="2">
    <location>
        <begin position="200"/>
        <end position="238"/>
    </location>
</feature>
<feature type="compositionally biased region" description="Polar residues" evidence="2">
    <location>
        <begin position="206"/>
        <end position="216"/>
    </location>
</feature>
<feature type="compositionally biased region" description="Basic residues" evidence="2">
    <location>
        <begin position="223"/>
        <end position="238"/>
    </location>
</feature>
<comment type="function">
    <text evidence="1">One of the primary rRNA binding proteins. Required for association of the 30S and 50S subunits to form the 70S ribosome, for tRNA binding and peptide bond formation. It has been suggested to have peptidyltransferase activity; this is somewhat controversial. Makes several contacts with the 16S rRNA in the 70S ribosome.</text>
</comment>
<comment type="subunit">
    <text evidence="1">Part of the 50S ribosomal subunit. Forms a bridge to the 30S subunit in the 70S ribosome.</text>
</comment>
<comment type="similarity">
    <text evidence="1">Belongs to the universal ribosomal protein uL2 family.</text>
</comment>
<protein>
    <recommendedName>
        <fullName evidence="1">Large ribosomal subunit protein uL2</fullName>
    </recommendedName>
    <alternativeName>
        <fullName evidence="3">50S ribosomal protein L2</fullName>
    </alternativeName>
</protein>
<dbReference type="EMBL" id="CP001404">
    <property type="protein sequence ID" value="ACP48516.1"/>
    <property type="molecule type" value="Genomic_DNA"/>
</dbReference>
<dbReference type="RefSeq" id="WP_012717440.1">
    <property type="nucleotide sequence ID" value="NC_012623.1"/>
</dbReference>
<dbReference type="SMR" id="C3NHA6"/>
<dbReference type="GeneID" id="7809817"/>
<dbReference type="KEGG" id="sin:YN1551_1425"/>
<dbReference type="HOGENOM" id="CLU_036235_0_1_2"/>
<dbReference type="Proteomes" id="UP000006818">
    <property type="component" value="Chromosome"/>
</dbReference>
<dbReference type="GO" id="GO:0022625">
    <property type="term" value="C:cytosolic large ribosomal subunit"/>
    <property type="evidence" value="ECO:0007669"/>
    <property type="project" value="TreeGrafter"/>
</dbReference>
<dbReference type="GO" id="GO:0019843">
    <property type="term" value="F:rRNA binding"/>
    <property type="evidence" value="ECO:0007669"/>
    <property type="project" value="UniProtKB-UniRule"/>
</dbReference>
<dbReference type="GO" id="GO:0003735">
    <property type="term" value="F:structural constituent of ribosome"/>
    <property type="evidence" value="ECO:0007669"/>
    <property type="project" value="InterPro"/>
</dbReference>
<dbReference type="GO" id="GO:0002181">
    <property type="term" value="P:cytoplasmic translation"/>
    <property type="evidence" value="ECO:0007669"/>
    <property type="project" value="TreeGrafter"/>
</dbReference>
<dbReference type="FunFam" id="2.30.30.30:FF:000001">
    <property type="entry name" value="50S ribosomal protein L2"/>
    <property type="match status" value="1"/>
</dbReference>
<dbReference type="FunFam" id="4.10.950.10:FF:000002">
    <property type="entry name" value="60S ribosomal protein L2"/>
    <property type="match status" value="1"/>
</dbReference>
<dbReference type="Gene3D" id="2.30.30.30">
    <property type="match status" value="1"/>
</dbReference>
<dbReference type="Gene3D" id="2.40.50.140">
    <property type="entry name" value="Nucleic acid-binding proteins"/>
    <property type="match status" value="1"/>
</dbReference>
<dbReference type="Gene3D" id="4.10.950.10">
    <property type="entry name" value="Ribosomal protein L2, domain 3"/>
    <property type="match status" value="1"/>
</dbReference>
<dbReference type="HAMAP" id="MF_01320_A">
    <property type="entry name" value="Ribosomal_uL2_A"/>
    <property type="match status" value="1"/>
</dbReference>
<dbReference type="InterPro" id="IPR012340">
    <property type="entry name" value="NA-bd_OB-fold"/>
</dbReference>
<dbReference type="InterPro" id="IPR014722">
    <property type="entry name" value="Rib_uL2_dom2"/>
</dbReference>
<dbReference type="InterPro" id="IPR002171">
    <property type="entry name" value="Ribosomal_uL2"/>
</dbReference>
<dbReference type="InterPro" id="IPR023672">
    <property type="entry name" value="Ribosomal_uL2_arc_euk"/>
</dbReference>
<dbReference type="InterPro" id="IPR022669">
    <property type="entry name" value="Ribosomal_uL2_C"/>
</dbReference>
<dbReference type="InterPro" id="IPR014726">
    <property type="entry name" value="Ribosomal_uL2_dom3"/>
</dbReference>
<dbReference type="InterPro" id="IPR022666">
    <property type="entry name" value="Ribosomal_uL2_RNA-bd_dom"/>
</dbReference>
<dbReference type="InterPro" id="IPR008991">
    <property type="entry name" value="Translation_prot_SH3-like_sf"/>
</dbReference>
<dbReference type="NCBIfam" id="NF007180">
    <property type="entry name" value="PRK09612.1"/>
    <property type="match status" value="1"/>
</dbReference>
<dbReference type="PANTHER" id="PTHR13691:SF16">
    <property type="entry name" value="LARGE RIBOSOMAL SUBUNIT PROTEIN UL2"/>
    <property type="match status" value="1"/>
</dbReference>
<dbReference type="PANTHER" id="PTHR13691">
    <property type="entry name" value="RIBOSOMAL PROTEIN L2"/>
    <property type="match status" value="1"/>
</dbReference>
<dbReference type="Pfam" id="PF00181">
    <property type="entry name" value="Ribosomal_L2"/>
    <property type="match status" value="1"/>
</dbReference>
<dbReference type="Pfam" id="PF03947">
    <property type="entry name" value="Ribosomal_L2_C"/>
    <property type="match status" value="1"/>
</dbReference>
<dbReference type="PIRSF" id="PIRSF002158">
    <property type="entry name" value="Ribosomal_L2"/>
    <property type="match status" value="1"/>
</dbReference>
<dbReference type="SMART" id="SM01383">
    <property type="entry name" value="Ribosomal_L2"/>
    <property type="match status" value="1"/>
</dbReference>
<dbReference type="SMART" id="SM01382">
    <property type="entry name" value="Ribosomal_L2_C"/>
    <property type="match status" value="1"/>
</dbReference>
<dbReference type="SUPFAM" id="SSF50249">
    <property type="entry name" value="Nucleic acid-binding proteins"/>
    <property type="match status" value="1"/>
</dbReference>
<dbReference type="SUPFAM" id="SSF50104">
    <property type="entry name" value="Translation proteins SH3-like domain"/>
    <property type="match status" value="1"/>
</dbReference>
<reference key="1">
    <citation type="journal article" date="2009" name="Proc. Natl. Acad. Sci. U.S.A.">
        <title>Biogeography of the Sulfolobus islandicus pan-genome.</title>
        <authorList>
            <person name="Reno M.L."/>
            <person name="Held N.L."/>
            <person name="Fields C.J."/>
            <person name="Burke P.V."/>
            <person name="Whitaker R.J."/>
        </authorList>
    </citation>
    <scope>NUCLEOTIDE SEQUENCE [LARGE SCALE GENOMIC DNA]</scope>
    <source>
        <strain>Y.N.15.51 / Yellowstone #2</strain>
    </source>
</reference>
<organism>
    <name type="scientific">Saccharolobus islandicus (strain Y.N.15.51 / Yellowstone #2)</name>
    <name type="common">Sulfolobus islandicus</name>
    <dbReference type="NCBI Taxonomy" id="419942"/>
    <lineage>
        <taxon>Archaea</taxon>
        <taxon>Thermoproteota</taxon>
        <taxon>Thermoprotei</taxon>
        <taxon>Sulfolobales</taxon>
        <taxon>Sulfolobaceae</taxon>
        <taxon>Saccharolobus</taxon>
    </lineage>
</organism>
<gene>
    <name evidence="1" type="primary">rpl2</name>
    <name type="ordered locus">YN1551_1425</name>
</gene>
<proteinExistence type="inferred from homology"/>
<keyword id="KW-0687">Ribonucleoprotein</keyword>
<keyword id="KW-0689">Ribosomal protein</keyword>
<keyword id="KW-0694">RNA-binding</keyword>
<keyword id="KW-0699">rRNA-binding</keyword>